<gene>
    <name evidence="1" type="primary">rpsD</name>
    <name type="ordered locus">jk1759</name>
</gene>
<evidence type="ECO:0000255" key="1">
    <source>
        <dbReference type="HAMAP-Rule" id="MF_01306"/>
    </source>
</evidence>
<evidence type="ECO:0000305" key="2"/>
<comment type="function">
    <text evidence="1">One of the primary rRNA binding proteins, it binds directly to 16S rRNA where it nucleates assembly of the body of the 30S subunit.</text>
</comment>
<comment type="function">
    <text evidence="1">With S5 and S12 plays an important role in translational accuracy.</text>
</comment>
<comment type="subunit">
    <text evidence="1">Part of the 30S ribosomal subunit. Contacts protein S5. The interaction surface between S4 and S5 is involved in control of translational fidelity.</text>
</comment>
<comment type="similarity">
    <text evidence="1">Belongs to the universal ribosomal protein uS4 family.</text>
</comment>
<dbReference type="EMBL" id="CR931997">
    <property type="protein sequence ID" value="CAI37936.1"/>
    <property type="molecule type" value="Genomic_DNA"/>
</dbReference>
<dbReference type="RefSeq" id="WP_005291869.1">
    <property type="nucleotide sequence ID" value="NC_007164.1"/>
</dbReference>
<dbReference type="SMR" id="Q4JTC1"/>
<dbReference type="STRING" id="306537.jk1759"/>
<dbReference type="GeneID" id="92739395"/>
<dbReference type="KEGG" id="cjk:jk1759"/>
<dbReference type="eggNOG" id="COG0522">
    <property type="taxonomic scope" value="Bacteria"/>
</dbReference>
<dbReference type="HOGENOM" id="CLU_092403_0_2_11"/>
<dbReference type="OrthoDB" id="9803672at2"/>
<dbReference type="Proteomes" id="UP000000545">
    <property type="component" value="Chromosome"/>
</dbReference>
<dbReference type="GO" id="GO:0015935">
    <property type="term" value="C:small ribosomal subunit"/>
    <property type="evidence" value="ECO:0007669"/>
    <property type="project" value="InterPro"/>
</dbReference>
<dbReference type="GO" id="GO:0019843">
    <property type="term" value="F:rRNA binding"/>
    <property type="evidence" value="ECO:0007669"/>
    <property type="project" value="UniProtKB-UniRule"/>
</dbReference>
<dbReference type="GO" id="GO:0003735">
    <property type="term" value="F:structural constituent of ribosome"/>
    <property type="evidence" value="ECO:0007669"/>
    <property type="project" value="InterPro"/>
</dbReference>
<dbReference type="GO" id="GO:0042274">
    <property type="term" value="P:ribosomal small subunit biogenesis"/>
    <property type="evidence" value="ECO:0007669"/>
    <property type="project" value="TreeGrafter"/>
</dbReference>
<dbReference type="GO" id="GO:0006412">
    <property type="term" value="P:translation"/>
    <property type="evidence" value="ECO:0007669"/>
    <property type="project" value="UniProtKB-UniRule"/>
</dbReference>
<dbReference type="CDD" id="cd00165">
    <property type="entry name" value="S4"/>
    <property type="match status" value="1"/>
</dbReference>
<dbReference type="FunFam" id="3.10.290.10:FF:000001">
    <property type="entry name" value="30S ribosomal protein S4"/>
    <property type="match status" value="1"/>
</dbReference>
<dbReference type="Gene3D" id="1.10.1050.10">
    <property type="entry name" value="Ribosomal Protein S4 Delta 41, Chain A, domain 1"/>
    <property type="match status" value="1"/>
</dbReference>
<dbReference type="Gene3D" id="3.10.290.10">
    <property type="entry name" value="RNA-binding S4 domain"/>
    <property type="match status" value="1"/>
</dbReference>
<dbReference type="HAMAP" id="MF_01306_B">
    <property type="entry name" value="Ribosomal_uS4_B"/>
    <property type="match status" value="1"/>
</dbReference>
<dbReference type="InterPro" id="IPR022801">
    <property type="entry name" value="Ribosomal_uS4"/>
</dbReference>
<dbReference type="InterPro" id="IPR005709">
    <property type="entry name" value="Ribosomal_uS4_bac-type"/>
</dbReference>
<dbReference type="InterPro" id="IPR018079">
    <property type="entry name" value="Ribosomal_uS4_CS"/>
</dbReference>
<dbReference type="InterPro" id="IPR001912">
    <property type="entry name" value="Ribosomal_uS4_N"/>
</dbReference>
<dbReference type="InterPro" id="IPR002942">
    <property type="entry name" value="S4_RNA-bd"/>
</dbReference>
<dbReference type="InterPro" id="IPR036986">
    <property type="entry name" value="S4_RNA-bd_sf"/>
</dbReference>
<dbReference type="NCBIfam" id="NF003717">
    <property type="entry name" value="PRK05327.1"/>
    <property type="match status" value="1"/>
</dbReference>
<dbReference type="NCBIfam" id="TIGR01017">
    <property type="entry name" value="rpsD_bact"/>
    <property type="match status" value="1"/>
</dbReference>
<dbReference type="PANTHER" id="PTHR11831">
    <property type="entry name" value="30S 40S RIBOSOMAL PROTEIN"/>
    <property type="match status" value="1"/>
</dbReference>
<dbReference type="PANTHER" id="PTHR11831:SF4">
    <property type="entry name" value="SMALL RIBOSOMAL SUBUNIT PROTEIN US4M"/>
    <property type="match status" value="1"/>
</dbReference>
<dbReference type="Pfam" id="PF00163">
    <property type="entry name" value="Ribosomal_S4"/>
    <property type="match status" value="1"/>
</dbReference>
<dbReference type="Pfam" id="PF01479">
    <property type="entry name" value="S4"/>
    <property type="match status" value="1"/>
</dbReference>
<dbReference type="SMART" id="SM01390">
    <property type="entry name" value="Ribosomal_S4"/>
    <property type="match status" value="1"/>
</dbReference>
<dbReference type="SMART" id="SM00363">
    <property type="entry name" value="S4"/>
    <property type="match status" value="1"/>
</dbReference>
<dbReference type="SUPFAM" id="SSF55174">
    <property type="entry name" value="Alpha-L RNA-binding motif"/>
    <property type="match status" value="1"/>
</dbReference>
<dbReference type="PROSITE" id="PS00632">
    <property type="entry name" value="RIBOSOMAL_S4"/>
    <property type="match status" value="1"/>
</dbReference>
<dbReference type="PROSITE" id="PS50889">
    <property type="entry name" value="S4"/>
    <property type="match status" value="1"/>
</dbReference>
<organism>
    <name type="scientific">Corynebacterium jeikeium (strain K411)</name>
    <dbReference type="NCBI Taxonomy" id="306537"/>
    <lineage>
        <taxon>Bacteria</taxon>
        <taxon>Bacillati</taxon>
        <taxon>Actinomycetota</taxon>
        <taxon>Actinomycetes</taxon>
        <taxon>Mycobacteriales</taxon>
        <taxon>Corynebacteriaceae</taxon>
        <taxon>Corynebacterium</taxon>
    </lineage>
</organism>
<reference key="1">
    <citation type="journal article" date="2005" name="J. Bacteriol.">
        <title>Complete genome sequence and analysis of the multiresistant nosocomial pathogen Corynebacterium jeikeium K411, a lipid-requiring bacterium of the human skin flora.</title>
        <authorList>
            <person name="Tauch A."/>
            <person name="Kaiser O."/>
            <person name="Hain T."/>
            <person name="Goesmann A."/>
            <person name="Weisshaar B."/>
            <person name="Albersmeier A."/>
            <person name="Bekel T."/>
            <person name="Bischoff N."/>
            <person name="Brune I."/>
            <person name="Chakraborty T."/>
            <person name="Kalinowski J."/>
            <person name="Meyer F."/>
            <person name="Rupp O."/>
            <person name="Schneiker S."/>
            <person name="Viehoever P."/>
            <person name="Puehler A."/>
        </authorList>
    </citation>
    <scope>NUCLEOTIDE SEQUENCE [LARGE SCALE GENOMIC DNA]</scope>
    <source>
        <strain>K411</strain>
    </source>
</reference>
<protein>
    <recommendedName>
        <fullName evidence="1">Small ribosomal subunit protein uS4</fullName>
    </recommendedName>
    <alternativeName>
        <fullName evidence="2">30S ribosomal protein S4</fullName>
    </alternativeName>
</protein>
<proteinExistence type="inferred from homology"/>
<feature type="chain" id="PRO_0000228890" description="Small ribosomal subunit protein uS4">
    <location>
        <begin position="1"/>
        <end position="201"/>
    </location>
</feature>
<feature type="domain" description="S4 RNA-binding" evidence="1">
    <location>
        <begin position="91"/>
        <end position="151"/>
    </location>
</feature>
<sequence length="201" mass="23337">MARYTGPVTRKSRRLRVDLVGGDNSFERRPYPPGQAGRARIKESEYLLQLQEKQKAKYTYGVLEKQFRRYYAEANRRPGKTGDNLVILLESRLDNVVYRAGLARTRRQARQLVSHGHFTVNGKKVNVPSFKVSQYDIIDVREKSRSMLWFEEAQEALVDTIVPAWLQVVPSTLRILVHQLPERAQIDIPLQEQLIVELYSK</sequence>
<name>RS4_CORJK</name>
<accession>Q4JTC1</accession>
<keyword id="KW-1185">Reference proteome</keyword>
<keyword id="KW-0687">Ribonucleoprotein</keyword>
<keyword id="KW-0689">Ribosomal protein</keyword>
<keyword id="KW-0694">RNA-binding</keyword>
<keyword id="KW-0699">rRNA-binding</keyword>